<evidence type="ECO:0000255" key="1">
    <source>
        <dbReference type="HAMAP-Rule" id="MF_00051"/>
    </source>
</evidence>
<comment type="function">
    <text evidence="1">Catalyzes the reversible interconversion of serine and glycine with tetrahydrofolate (THF) serving as the one-carbon carrier. This reaction serves as the major source of one-carbon groups required for the biosynthesis of purines, thymidylate, methionine, and other important biomolecules. Also exhibits THF-independent aldolase activity toward beta-hydroxyamino acids, producing glycine and aldehydes, via a retro-aldol mechanism.</text>
</comment>
<comment type="catalytic activity">
    <reaction evidence="1">
        <text>(6R)-5,10-methylene-5,6,7,8-tetrahydrofolate + glycine + H2O = (6S)-5,6,7,8-tetrahydrofolate + L-serine</text>
        <dbReference type="Rhea" id="RHEA:15481"/>
        <dbReference type="ChEBI" id="CHEBI:15377"/>
        <dbReference type="ChEBI" id="CHEBI:15636"/>
        <dbReference type="ChEBI" id="CHEBI:33384"/>
        <dbReference type="ChEBI" id="CHEBI:57305"/>
        <dbReference type="ChEBI" id="CHEBI:57453"/>
        <dbReference type="EC" id="2.1.2.1"/>
    </reaction>
</comment>
<comment type="cofactor">
    <cofactor evidence="1">
        <name>pyridoxal 5'-phosphate</name>
        <dbReference type="ChEBI" id="CHEBI:597326"/>
    </cofactor>
</comment>
<comment type="pathway">
    <text evidence="1">One-carbon metabolism; tetrahydrofolate interconversion.</text>
</comment>
<comment type="pathway">
    <text evidence="1">Amino-acid biosynthesis; glycine biosynthesis; glycine from L-serine: step 1/1.</text>
</comment>
<comment type="subunit">
    <text evidence="1">Homodimer.</text>
</comment>
<comment type="subcellular location">
    <subcellularLocation>
        <location evidence="1">Cytoplasm</location>
    </subcellularLocation>
</comment>
<comment type="similarity">
    <text evidence="1">Belongs to the SHMT family.</text>
</comment>
<proteinExistence type="inferred from homology"/>
<dbReference type="EC" id="2.1.2.1" evidence="1"/>
<dbReference type="EMBL" id="CR555306">
    <property type="protein sequence ID" value="CAI06670.1"/>
    <property type="molecule type" value="Genomic_DNA"/>
</dbReference>
<dbReference type="RefSeq" id="WP_011236400.1">
    <property type="nucleotide sequence ID" value="NC_006513.1"/>
</dbReference>
<dbReference type="SMR" id="Q5P7P1"/>
<dbReference type="STRING" id="76114.ebA1042"/>
<dbReference type="KEGG" id="eba:ebA1042"/>
<dbReference type="eggNOG" id="COG0112">
    <property type="taxonomic scope" value="Bacteria"/>
</dbReference>
<dbReference type="HOGENOM" id="CLU_022477_2_1_4"/>
<dbReference type="OrthoDB" id="9803846at2"/>
<dbReference type="UniPathway" id="UPA00193"/>
<dbReference type="UniPathway" id="UPA00288">
    <property type="reaction ID" value="UER01023"/>
</dbReference>
<dbReference type="Proteomes" id="UP000006552">
    <property type="component" value="Chromosome"/>
</dbReference>
<dbReference type="GO" id="GO:0005829">
    <property type="term" value="C:cytosol"/>
    <property type="evidence" value="ECO:0007669"/>
    <property type="project" value="TreeGrafter"/>
</dbReference>
<dbReference type="GO" id="GO:0004372">
    <property type="term" value="F:glycine hydroxymethyltransferase activity"/>
    <property type="evidence" value="ECO:0007669"/>
    <property type="project" value="UniProtKB-UniRule"/>
</dbReference>
<dbReference type="GO" id="GO:0030170">
    <property type="term" value="F:pyridoxal phosphate binding"/>
    <property type="evidence" value="ECO:0007669"/>
    <property type="project" value="UniProtKB-UniRule"/>
</dbReference>
<dbReference type="GO" id="GO:0019264">
    <property type="term" value="P:glycine biosynthetic process from serine"/>
    <property type="evidence" value="ECO:0007669"/>
    <property type="project" value="UniProtKB-UniRule"/>
</dbReference>
<dbReference type="GO" id="GO:0035999">
    <property type="term" value="P:tetrahydrofolate interconversion"/>
    <property type="evidence" value="ECO:0007669"/>
    <property type="project" value="UniProtKB-UniRule"/>
</dbReference>
<dbReference type="CDD" id="cd00378">
    <property type="entry name" value="SHMT"/>
    <property type="match status" value="1"/>
</dbReference>
<dbReference type="FunFam" id="3.40.640.10:FF:000001">
    <property type="entry name" value="Serine hydroxymethyltransferase"/>
    <property type="match status" value="1"/>
</dbReference>
<dbReference type="FunFam" id="3.90.1150.10:FF:000003">
    <property type="entry name" value="Serine hydroxymethyltransferase"/>
    <property type="match status" value="1"/>
</dbReference>
<dbReference type="Gene3D" id="3.90.1150.10">
    <property type="entry name" value="Aspartate Aminotransferase, domain 1"/>
    <property type="match status" value="1"/>
</dbReference>
<dbReference type="Gene3D" id="3.40.640.10">
    <property type="entry name" value="Type I PLP-dependent aspartate aminotransferase-like (Major domain)"/>
    <property type="match status" value="1"/>
</dbReference>
<dbReference type="HAMAP" id="MF_00051">
    <property type="entry name" value="SHMT"/>
    <property type="match status" value="1"/>
</dbReference>
<dbReference type="InterPro" id="IPR015424">
    <property type="entry name" value="PyrdxlP-dep_Trfase"/>
</dbReference>
<dbReference type="InterPro" id="IPR015421">
    <property type="entry name" value="PyrdxlP-dep_Trfase_major"/>
</dbReference>
<dbReference type="InterPro" id="IPR015422">
    <property type="entry name" value="PyrdxlP-dep_Trfase_small"/>
</dbReference>
<dbReference type="InterPro" id="IPR001085">
    <property type="entry name" value="Ser_HO-MeTrfase"/>
</dbReference>
<dbReference type="InterPro" id="IPR049943">
    <property type="entry name" value="Ser_HO-MeTrfase-like"/>
</dbReference>
<dbReference type="InterPro" id="IPR019798">
    <property type="entry name" value="Ser_HO-MeTrfase_PLP_BS"/>
</dbReference>
<dbReference type="InterPro" id="IPR039429">
    <property type="entry name" value="SHMT-like_dom"/>
</dbReference>
<dbReference type="NCBIfam" id="NF000586">
    <property type="entry name" value="PRK00011.1"/>
    <property type="match status" value="1"/>
</dbReference>
<dbReference type="PANTHER" id="PTHR11680">
    <property type="entry name" value="SERINE HYDROXYMETHYLTRANSFERASE"/>
    <property type="match status" value="1"/>
</dbReference>
<dbReference type="PANTHER" id="PTHR11680:SF50">
    <property type="entry name" value="SERINE HYDROXYMETHYLTRANSFERASE"/>
    <property type="match status" value="1"/>
</dbReference>
<dbReference type="Pfam" id="PF00464">
    <property type="entry name" value="SHMT"/>
    <property type="match status" value="1"/>
</dbReference>
<dbReference type="PIRSF" id="PIRSF000412">
    <property type="entry name" value="SHMT"/>
    <property type="match status" value="1"/>
</dbReference>
<dbReference type="SUPFAM" id="SSF53383">
    <property type="entry name" value="PLP-dependent transferases"/>
    <property type="match status" value="1"/>
</dbReference>
<dbReference type="PROSITE" id="PS00096">
    <property type="entry name" value="SHMT"/>
    <property type="match status" value="1"/>
</dbReference>
<reference key="1">
    <citation type="journal article" date="2005" name="Arch. Microbiol.">
        <title>The genome sequence of an anaerobic aromatic-degrading denitrifying bacterium, strain EbN1.</title>
        <authorList>
            <person name="Rabus R."/>
            <person name="Kube M."/>
            <person name="Heider J."/>
            <person name="Beck A."/>
            <person name="Heitmann K."/>
            <person name="Widdel F."/>
            <person name="Reinhardt R."/>
        </authorList>
    </citation>
    <scope>NUCLEOTIDE SEQUENCE [LARGE SCALE GENOMIC DNA]</scope>
    <source>
        <strain>DSM 19018 / LMG 30748 / EbN1</strain>
    </source>
</reference>
<organism>
    <name type="scientific">Aromatoleum aromaticum (strain DSM 19018 / LMG 30748 / EbN1)</name>
    <name type="common">Azoarcus sp. (strain EbN1)</name>
    <dbReference type="NCBI Taxonomy" id="76114"/>
    <lineage>
        <taxon>Bacteria</taxon>
        <taxon>Pseudomonadati</taxon>
        <taxon>Pseudomonadota</taxon>
        <taxon>Betaproteobacteria</taxon>
        <taxon>Rhodocyclales</taxon>
        <taxon>Rhodocyclaceae</taxon>
        <taxon>Aromatoleum</taxon>
    </lineage>
</organism>
<feature type="chain" id="PRO_0000234948" description="Serine hydroxymethyltransferase">
    <location>
        <begin position="1"/>
        <end position="416"/>
    </location>
</feature>
<feature type="binding site" evidence="1">
    <location>
        <position position="121"/>
    </location>
    <ligand>
        <name>(6S)-5,6,7,8-tetrahydrofolate</name>
        <dbReference type="ChEBI" id="CHEBI:57453"/>
    </ligand>
</feature>
<feature type="binding site" evidence="1">
    <location>
        <begin position="125"/>
        <end position="127"/>
    </location>
    <ligand>
        <name>(6S)-5,6,7,8-tetrahydrofolate</name>
        <dbReference type="ChEBI" id="CHEBI:57453"/>
    </ligand>
</feature>
<feature type="site" description="Plays an important role in substrate specificity" evidence="1">
    <location>
        <position position="228"/>
    </location>
</feature>
<feature type="modified residue" description="N6-(pyridoxal phosphate)lysine" evidence="1">
    <location>
        <position position="229"/>
    </location>
</feature>
<sequence length="416" mass="45364">MFSAQDTLAKVDPELWTAIQAENRRQEDHIELIASENYVSHAVMEAQGSQLTNKYAEGYPGKRYYGGCEHVDVAEQIAIDRIKKLFGAEAANVQPNSGSQANQAVLMAFAKPGDTIMGMSLAEGGHLTHGMPLNMSGKWFNVVAYGLDEKEEIDYDAMERLAREHKPRIIIAGASAYSLRIDFERFAKIAKEIGAIFWVDMAHYAGLIAAGYYPNPVPHADVVTSTTHKTLRGPRGGIILMKAEHEKAINSAIFPGLQGGPLMHVIAAKAVAFKEALTPQFRDYQEQVIANARVMARVLGEERGLRIISGRTESHVFLVDLRSKNITGKAAEAVLGSAHITVNKNSIPKDPEKPFVTSGIRIGSPAMTTRGFTEIEAEQVAHLIADVLDAPQDEAVLANVQAKVAELCARHPVYGK</sequence>
<protein>
    <recommendedName>
        <fullName evidence="1">Serine hydroxymethyltransferase</fullName>
        <shortName evidence="1">SHMT</shortName>
        <shortName evidence="1">Serine methylase</shortName>
        <ecNumber evidence="1">2.1.2.1</ecNumber>
    </recommendedName>
</protein>
<keyword id="KW-0028">Amino-acid biosynthesis</keyword>
<keyword id="KW-0963">Cytoplasm</keyword>
<keyword id="KW-0554">One-carbon metabolism</keyword>
<keyword id="KW-0663">Pyridoxal phosphate</keyword>
<keyword id="KW-1185">Reference proteome</keyword>
<keyword id="KW-0808">Transferase</keyword>
<accession>Q5P7P1</accession>
<gene>
    <name evidence="1" type="primary">glyA</name>
    <name type="ordered locus">AZOSEA05480</name>
    <name type="ORF">ebA1042</name>
</gene>
<name>GLYA_AROAE</name>